<organism>
    <name type="scientific">Methanococcus maripaludis (strain DSM 14266 / JCM 13030 / NBRC 101832 / S2 / LL)</name>
    <dbReference type="NCBI Taxonomy" id="267377"/>
    <lineage>
        <taxon>Archaea</taxon>
        <taxon>Methanobacteriati</taxon>
        <taxon>Methanobacteriota</taxon>
        <taxon>Methanomada group</taxon>
        <taxon>Methanococci</taxon>
        <taxon>Methanococcales</taxon>
        <taxon>Methanococcaceae</taxon>
        <taxon>Methanococcus</taxon>
    </lineage>
</organism>
<dbReference type="EC" id="3.5.4.10" evidence="1"/>
<dbReference type="EMBL" id="BX950229">
    <property type="protein sequence ID" value="CAF30866.1"/>
    <property type="molecule type" value="Genomic_DNA"/>
</dbReference>
<dbReference type="RefSeq" id="WP_011171254.1">
    <property type="nucleotide sequence ID" value="NC_005791.1"/>
</dbReference>
<dbReference type="SMR" id="Q6LXN9"/>
<dbReference type="STRING" id="267377.MMP1310"/>
<dbReference type="EnsemblBacteria" id="CAF30866">
    <property type="protein sequence ID" value="CAF30866"/>
    <property type="gene ID" value="MMP1310"/>
</dbReference>
<dbReference type="GeneID" id="2762594"/>
<dbReference type="KEGG" id="mmp:MMP1310"/>
<dbReference type="PATRIC" id="fig|267377.15.peg.1345"/>
<dbReference type="eggNOG" id="arCOG04727">
    <property type="taxonomic scope" value="Archaea"/>
</dbReference>
<dbReference type="HOGENOM" id="CLU_1352116_0_0_2"/>
<dbReference type="OrthoDB" id="92928at2157"/>
<dbReference type="UniPathway" id="UPA00074">
    <property type="reaction ID" value="UER00135"/>
</dbReference>
<dbReference type="Proteomes" id="UP000000590">
    <property type="component" value="Chromosome"/>
</dbReference>
<dbReference type="GO" id="GO:0003937">
    <property type="term" value="F:IMP cyclohydrolase activity"/>
    <property type="evidence" value="ECO:0007669"/>
    <property type="project" value="UniProtKB-UniRule"/>
</dbReference>
<dbReference type="GO" id="GO:0006189">
    <property type="term" value="P:'de novo' IMP biosynthetic process"/>
    <property type="evidence" value="ECO:0007669"/>
    <property type="project" value="UniProtKB-UniRule"/>
</dbReference>
<dbReference type="Gene3D" id="3.60.20.20">
    <property type="entry name" value="Inosine monophosphate cyclohydrolase-like"/>
    <property type="match status" value="1"/>
</dbReference>
<dbReference type="HAMAP" id="MF_00705">
    <property type="entry name" value="IMP_cyclohydrol"/>
    <property type="match status" value="1"/>
</dbReference>
<dbReference type="InterPro" id="IPR010191">
    <property type="entry name" value="IMP_cyclohydrolase"/>
</dbReference>
<dbReference type="InterPro" id="IPR020600">
    <property type="entry name" value="IMP_cyclohydrolase-like"/>
</dbReference>
<dbReference type="InterPro" id="IPR036795">
    <property type="entry name" value="IMP_cyclohydrolase-like_sf"/>
</dbReference>
<dbReference type="NCBIfam" id="NF003167">
    <property type="entry name" value="PRK04151.1"/>
    <property type="match status" value="1"/>
</dbReference>
<dbReference type="NCBIfam" id="TIGR01922">
    <property type="entry name" value="purO_arch"/>
    <property type="match status" value="1"/>
</dbReference>
<dbReference type="Pfam" id="PF07826">
    <property type="entry name" value="IMP_cyclohyd"/>
    <property type="match status" value="1"/>
</dbReference>
<dbReference type="PIRSF" id="PIRSF004866">
    <property type="entry name" value="IMP_cclhdr_arch"/>
    <property type="match status" value="1"/>
</dbReference>
<dbReference type="SUPFAM" id="SSF75569">
    <property type="entry name" value="Archaeal IMP cyclohydrolase PurO"/>
    <property type="match status" value="1"/>
</dbReference>
<accession>Q6LXN9</accession>
<feature type="chain" id="PRO_0000349162" description="IMP cyclohydrolase">
    <location>
        <begin position="1"/>
        <end position="201"/>
    </location>
</feature>
<sequence>MYIGRFLVLGKTDEGNPFVTYRVSSRSFPNRVAKVMNDETVAILPKDLEEMFKNPYITYNCVKLVGDVAVATNGSHTDIIADKIKLGLPIRDALSYSLLTMDYEKDDYNTPRIAVVITKDEAYMGYVTDSDVRIKKVELEAGKAYYLSVYEACKITEHQVISVTGKTAEEVTKFVMDYEEFEKPVTAATVLVKDGFKLATI</sequence>
<comment type="function">
    <text evidence="1">Catalyzes the cyclization of 5-formylamidoimidazole-4-carboxamide ribonucleotide to IMP.</text>
</comment>
<comment type="catalytic activity">
    <reaction evidence="1">
        <text>IMP + H2O = 5-formamido-1-(5-phospho-D-ribosyl)imidazole-4-carboxamide</text>
        <dbReference type="Rhea" id="RHEA:18445"/>
        <dbReference type="ChEBI" id="CHEBI:15377"/>
        <dbReference type="ChEBI" id="CHEBI:58053"/>
        <dbReference type="ChEBI" id="CHEBI:58467"/>
        <dbReference type="EC" id="3.5.4.10"/>
    </reaction>
</comment>
<comment type="pathway">
    <text evidence="1">Purine metabolism; IMP biosynthesis via de novo pathway; IMP from 5-formamido-1-(5-phospho-D-ribosyl)imidazole-4-carboxamide: step 1/1.</text>
</comment>
<comment type="similarity">
    <text evidence="1">Belongs to the archaeal IMP cyclohydrolase family.</text>
</comment>
<reference key="1">
    <citation type="journal article" date="2004" name="J. Bacteriol.">
        <title>Complete genome sequence of the genetically tractable hydrogenotrophic methanogen Methanococcus maripaludis.</title>
        <authorList>
            <person name="Hendrickson E.L."/>
            <person name="Kaul R."/>
            <person name="Zhou Y."/>
            <person name="Bovee D."/>
            <person name="Chapman P."/>
            <person name="Chung J."/>
            <person name="Conway de Macario E."/>
            <person name="Dodsworth J.A."/>
            <person name="Gillett W."/>
            <person name="Graham D.E."/>
            <person name="Hackett M."/>
            <person name="Haydock A.K."/>
            <person name="Kang A."/>
            <person name="Land M.L."/>
            <person name="Levy R."/>
            <person name="Lie T.J."/>
            <person name="Major T.A."/>
            <person name="Moore B.C."/>
            <person name="Porat I."/>
            <person name="Palmeiri A."/>
            <person name="Rouse G."/>
            <person name="Saenphimmachak C."/>
            <person name="Soell D."/>
            <person name="Van Dien S."/>
            <person name="Wang T."/>
            <person name="Whitman W.B."/>
            <person name="Xia Q."/>
            <person name="Zhang Y."/>
            <person name="Larimer F.W."/>
            <person name="Olson M.V."/>
            <person name="Leigh J.A."/>
        </authorList>
    </citation>
    <scope>NUCLEOTIDE SEQUENCE [LARGE SCALE GENOMIC DNA]</scope>
    <source>
        <strain>DSM 14266 / JCM 13030 / NBRC 101832 / S2 / LL</strain>
    </source>
</reference>
<proteinExistence type="inferred from homology"/>
<keyword id="KW-0378">Hydrolase</keyword>
<keyword id="KW-0658">Purine biosynthesis</keyword>
<keyword id="KW-1185">Reference proteome</keyword>
<gene>
    <name evidence="1" type="primary">purO</name>
    <name type="ordered locus">MMP1310</name>
</gene>
<evidence type="ECO:0000255" key="1">
    <source>
        <dbReference type="HAMAP-Rule" id="MF_00705"/>
    </source>
</evidence>
<protein>
    <recommendedName>
        <fullName evidence="1">IMP cyclohydrolase</fullName>
        <ecNumber evidence="1">3.5.4.10</ecNumber>
    </recommendedName>
    <alternativeName>
        <fullName evidence="1">IMP synthase</fullName>
    </alternativeName>
    <alternativeName>
        <fullName evidence="1">Inosinicase</fullName>
    </alternativeName>
</protein>
<name>PURO_METMP</name>